<accession>Q8L6Z5</accession>
<accession>Q9FJM3</accession>
<protein>
    <recommendedName>
        <fullName evidence="5">Early nodulin-like protein 10</fullName>
        <shortName evidence="5">AtENODL10</shortName>
    </recommendedName>
    <alternativeName>
        <fullName evidence="7">Phytocyanin-like protein ENODL10</fullName>
    </alternativeName>
</protein>
<sequence length="182" mass="20343">MSSVMMCCCLLLLFGLLSEGREILVGGKSNTWKAPESRDETLNQWSGRTRFKIGDSLLWKYNAENDSVLQVRQTDYERCDRSEPIRGYKDGHTNIELKRSGPFYFISGEEGHCQRGEKLRVVVLSPNHNRSVVDAPAPVNIVLSPNYNRSVAAAPLNAHIMNKGSLNTAWSLLLLLPLGLLV</sequence>
<organism>
    <name type="scientific">Arabidopsis thaliana</name>
    <name type="common">Mouse-ear cress</name>
    <dbReference type="NCBI Taxonomy" id="3702"/>
    <lineage>
        <taxon>Eukaryota</taxon>
        <taxon>Viridiplantae</taxon>
        <taxon>Streptophyta</taxon>
        <taxon>Embryophyta</taxon>
        <taxon>Tracheophyta</taxon>
        <taxon>Spermatophyta</taxon>
        <taxon>Magnoliopsida</taxon>
        <taxon>eudicotyledons</taxon>
        <taxon>Gunneridae</taxon>
        <taxon>Pentapetalae</taxon>
        <taxon>rosids</taxon>
        <taxon>malvids</taxon>
        <taxon>Brassicales</taxon>
        <taxon>Brassicaceae</taxon>
        <taxon>Camelineae</taxon>
        <taxon>Arabidopsis</taxon>
    </lineage>
</organism>
<name>ENL10_ARATH</name>
<feature type="signal peptide" evidence="1">
    <location>
        <begin position="1"/>
        <end position="20"/>
    </location>
</feature>
<feature type="chain" id="PRO_5014312185" description="Early nodulin-like protein 10">
    <location>
        <begin position="21"/>
        <end position="157"/>
    </location>
</feature>
<feature type="propeptide" id="PRO_0000457741" description="Removed in mature form" evidence="1">
    <location>
        <begin position="158"/>
        <end position="182"/>
    </location>
</feature>
<feature type="domain" description="Phytocyanin" evidence="3">
    <location>
        <begin position="21"/>
        <end position="125"/>
    </location>
</feature>
<feature type="lipid moiety-binding region" description="GPI-anchor amidated asparagine" evidence="1">
    <location>
        <position position="157"/>
    </location>
</feature>
<feature type="glycosylation site" description="N-linked (GlcNAc...) asparagine" evidence="2">
    <location>
        <position position="65"/>
    </location>
</feature>
<feature type="glycosylation site" description="N-linked (GlcNAc...) asparagine" evidence="2">
    <location>
        <position position="129"/>
    </location>
</feature>
<feature type="glycosylation site" description="N-linked (GlcNAc...) asparagine" evidence="2">
    <location>
        <position position="148"/>
    </location>
</feature>
<feature type="disulfide bond" evidence="3">
    <location>
        <begin position="79"/>
        <end position="113"/>
    </location>
</feature>
<feature type="splice variant" id="VSP_061810" description="In isoform 2.">
    <original>MSSVMMCCCLLLLFGLLSE</original>
    <variation>MVKKGLVTINTQLCSNCN</variation>
    <location>
        <begin position="1"/>
        <end position="19"/>
    </location>
</feature>
<gene>
    <name evidence="5" type="primary">ENODL10</name>
    <name evidence="5" type="synonym">EN10</name>
    <name evidence="8" type="ordered locus">At5g57920</name>
    <name evidence="9" type="ORF">MTI20.18</name>
</gene>
<proteinExistence type="evidence at transcript level"/>
<keyword id="KW-0025">Alternative splicing</keyword>
<keyword id="KW-1003">Cell membrane</keyword>
<keyword id="KW-1015">Disulfide bond</keyword>
<keyword id="KW-0325">Glycoprotein</keyword>
<keyword id="KW-0336">GPI-anchor</keyword>
<keyword id="KW-0449">Lipoprotein</keyword>
<keyword id="KW-0472">Membrane</keyword>
<keyword id="KW-1185">Reference proteome</keyword>
<keyword id="KW-0732">Signal</keyword>
<evidence type="ECO:0000255" key="1"/>
<evidence type="ECO:0000255" key="2">
    <source>
        <dbReference type="PROSITE-ProRule" id="PRU00498"/>
    </source>
</evidence>
<evidence type="ECO:0000255" key="3">
    <source>
        <dbReference type="PROSITE-ProRule" id="PRU00818"/>
    </source>
</evidence>
<evidence type="ECO:0000269" key="4">
    <source>
    </source>
</evidence>
<evidence type="ECO:0000303" key="5">
    <source>
    </source>
</evidence>
<evidence type="ECO:0000303" key="6">
    <source>
    </source>
</evidence>
<evidence type="ECO:0000305" key="7"/>
<evidence type="ECO:0000312" key="8">
    <source>
        <dbReference type="Araport" id="AT5G57920"/>
    </source>
</evidence>
<evidence type="ECO:0000312" key="9">
    <source>
        <dbReference type="EMBL" id="BAB08862.1"/>
    </source>
</evidence>
<comment type="function">
    <text evidence="6">May act as a carbohydrate transporter.</text>
</comment>
<comment type="subcellular location">
    <subcellularLocation>
        <location evidence="1">Cell membrane</location>
        <topology evidence="1">Lipid-anchor</topology>
        <topology evidence="1">GPI-anchor</topology>
    </subcellularLocation>
</comment>
<comment type="alternative products">
    <event type="alternative splicing"/>
    <isoform>
        <id>Q8L6Z5-1</id>
        <name>1</name>
        <sequence type="displayed"/>
    </isoform>
    <isoform>
        <id>Q8L6Z5-2</id>
        <name>2</name>
        <sequence type="described" ref="VSP_061810"/>
    </isoform>
</comment>
<comment type="tissue specificity">
    <text evidence="4">Mostly expressed in flowers, and, to a lower extent, in leaves, but barely in seedlings, stems, seeds and roots.</text>
</comment>
<comment type="similarity">
    <text evidence="7">Belongs to the early nodulin-like (ENODL) family.</text>
</comment>
<reference key="1">
    <citation type="journal article" date="1998" name="DNA Res.">
        <title>Structural analysis of Arabidopsis thaliana chromosome 5. VI. Sequence features of the regions of 1,367,185 bp covered by 19 physically assigned P1 and TAC clones.</title>
        <authorList>
            <person name="Kotani H."/>
            <person name="Nakamura Y."/>
            <person name="Sato S."/>
            <person name="Asamizu E."/>
            <person name="Kaneko T."/>
            <person name="Miyajima N."/>
            <person name="Tabata S."/>
        </authorList>
    </citation>
    <scope>NUCLEOTIDE SEQUENCE [LARGE SCALE GENOMIC DNA]</scope>
    <source>
        <strain>cv. Columbia</strain>
    </source>
</reference>
<reference key="2">
    <citation type="journal article" date="2017" name="Plant J.">
        <title>Araport11: a complete reannotation of the Arabidopsis thaliana reference genome.</title>
        <authorList>
            <person name="Cheng C.Y."/>
            <person name="Krishnakumar V."/>
            <person name="Chan A.P."/>
            <person name="Thibaud-Nissen F."/>
            <person name="Schobel S."/>
            <person name="Town C.D."/>
        </authorList>
    </citation>
    <scope>GENOME REANNOTATION</scope>
    <source>
        <strain>cv. Columbia</strain>
    </source>
</reference>
<reference key="3">
    <citation type="journal article" date="2003" name="Science">
        <title>Empirical analysis of transcriptional activity in the Arabidopsis genome.</title>
        <authorList>
            <person name="Yamada K."/>
            <person name="Lim J."/>
            <person name="Dale J.M."/>
            <person name="Chen H."/>
            <person name="Shinn P."/>
            <person name="Palm C.J."/>
            <person name="Southwick A.M."/>
            <person name="Wu H.C."/>
            <person name="Kim C.J."/>
            <person name="Nguyen M."/>
            <person name="Pham P.K."/>
            <person name="Cheuk R.F."/>
            <person name="Karlin-Newmann G."/>
            <person name="Liu S.X."/>
            <person name="Lam B."/>
            <person name="Sakano H."/>
            <person name="Wu T."/>
            <person name="Yu G."/>
            <person name="Miranda M."/>
            <person name="Quach H.L."/>
            <person name="Tripp M."/>
            <person name="Chang C.H."/>
            <person name="Lee J.M."/>
            <person name="Toriumi M.J."/>
            <person name="Chan M.M."/>
            <person name="Tang C.C."/>
            <person name="Onodera C.S."/>
            <person name="Deng J.M."/>
            <person name="Akiyama K."/>
            <person name="Ansari Y."/>
            <person name="Arakawa T."/>
            <person name="Banh J."/>
            <person name="Banno F."/>
            <person name="Bowser L."/>
            <person name="Brooks S.Y."/>
            <person name="Carninci P."/>
            <person name="Chao Q."/>
            <person name="Choy N."/>
            <person name="Enju A."/>
            <person name="Goldsmith A.D."/>
            <person name="Gurjal M."/>
            <person name="Hansen N.F."/>
            <person name="Hayashizaki Y."/>
            <person name="Johnson-Hopson C."/>
            <person name="Hsuan V.W."/>
            <person name="Iida K."/>
            <person name="Karnes M."/>
            <person name="Khan S."/>
            <person name="Koesema E."/>
            <person name="Ishida J."/>
            <person name="Jiang P.X."/>
            <person name="Jones T."/>
            <person name="Kawai J."/>
            <person name="Kamiya A."/>
            <person name="Meyers C."/>
            <person name="Nakajima M."/>
            <person name="Narusaka M."/>
            <person name="Seki M."/>
            <person name="Sakurai T."/>
            <person name="Satou M."/>
            <person name="Tamse R."/>
            <person name="Vaysberg M."/>
            <person name="Wallender E.K."/>
            <person name="Wong C."/>
            <person name="Yamamura Y."/>
            <person name="Yuan S."/>
            <person name="Shinozaki K."/>
            <person name="Davis R.W."/>
            <person name="Theologis A."/>
            <person name="Ecker J.R."/>
        </authorList>
    </citation>
    <scope>NUCLEOTIDE SEQUENCE [LARGE SCALE MRNA] (ISOFORM 1)</scope>
    <source>
        <strain>cv. Columbia</strain>
    </source>
</reference>
<reference key="4">
    <citation type="journal article" date="2009" name="Biosci. Biotechnol. Biochem.">
        <title>Genome-wide identification, structure and expression studies, and mutant collection of 22 early nodulin-like protein genes in Arabidopsis.</title>
        <authorList>
            <person name="Mashiguchi K."/>
            <person name="Asami T."/>
            <person name="Suzuki Y."/>
        </authorList>
    </citation>
    <scope>TISSUE SPECIFICITY</scope>
    <scope>GENE FAMILY</scope>
    <scope>NOMENCLATURE</scope>
    <source>
        <strain>cv. Columbia</strain>
    </source>
</reference>
<reference key="5">
    <citation type="journal article" date="2014" name="Plant Cell Physiol.">
        <title>Emerging functions of nodulin-like proteins in non-nodulating plant species.</title>
        <authorList>
            <person name="Denance N."/>
            <person name="Szurek B."/>
            <person name="Noel L.D."/>
        </authorList>
    </citation>
    <scope>REVIEW ON NODULIN-LIKE PROTEINS</scope>
</reference>
<dbReference type="EMBL" id="AB013396">
    <property type="protein sequence ID" value="BAB08862.1"/>
    <property type="molecule type" value="Genomic_DNA"/>
</dbReference>
<dbReference type="EMBL" id="CP002688">
    <property type="protein sequence ID" value="AED96971.1"/>
    <property type="molecule type" value="Genomic_DNA"/>
</dbReference>
<dbReference type="EMBL" id="CP002688">
    <property type="protein sequence ID" value="ANM70377.1"/>
    <property type="molecule type" value="Genomic_DNA"/>
</dbReference>
<dbReference type="EMBL" id="AY140062">
    <property type="protein sequence ID" value="AAM98203.1"/>
    <property type="molecule type" value="mRNA"/>
</dbReference>
<dbReference type="EMBL" id="BT006551">
    <property type="protein sequence ID" value="AAP21359.1"/>
    <property type="molecule type" value="mRNA"/>
</dbReference>
<dbReference type="RefSeq" id="NP_001331993.1">
    <molecule id="Q8L6Z5-2"/>
    <property type="nucleotide sequence ID" value="NM_001345279.1"/>
</dbReference>
<dbReference type="RefSeq" id="NP_200600.2">
    <molecule id="Q8L6Z5-1"/>
    <property type="nucleotide sequence ID" value="NM_125177.2"/>
</dbReference>
<dbReference type="SMR" id="Q8L6Z5"/>
<dbReference type="FunCoup" id="Q8L6Z5">
    <property type="interactions" value="4"/>
</dbReference>
<dbReference type="GlyGen" id="Q8L6Z5">
    <property type="glycosylation" value="3 sites"/>
</dbReference>
<dbReference type="iPTMnet" id="Q8L6Z5"/>
<dbReference type="PaxDb" id="3702-AT5G57920.1"/>
<dbReference type="ProteomicsDB" id="178843"/>
<dbReference type="ProteomicsDB" id="192009"/>
<dbReference type="EnsemblPlants" id="AT5G57920.1">
    <molecule id="Q8L6Z5-1"/>
    <property type="protein sequence ID" value="AT5G57920.1"/>
    <property type="gene ID" value="AT5G57920"/>
</dbReference>
<dbReference type="EnsemblPlants" id="AT5G57920.2">
    <molecule id="Q8L6Z5-2"/>
    <property type="protein sequence ID" value="AT5G57920.2"/>
    <property type="gene ID" value="AT5G57920"/>
</dbReference>
<dbReference type="GeneID" id="835903"/>
<dbReference type="Gramene" id="AT5G57920.1">
    <molecule id="Q8L6Z5-1"/>
    <property type="protein sequence ID" value="AT5G57920.1"/>
    <property type="gene ID" value="AT5G57920"/>
</dbReference>
<dbReference type="Gramene" id="AT5G57920.2">
    <molecule id="Q8L6Z5-2"/>
    <property type="protein sequence ID" value="AT5G57920.2"/>
    <property type="gene ID" value="AT5G57920"/>
</dbReference>
<dbReference type="KEGG" id="ath:AT5G57920"/>
<dbReference type="Araport" id="AT5G57920"/>
<dbReference type="TAIR" id="AT5G57920">
    <property type="gene designation" value="ENODL10"/>
</dbReference>
<dbReference type="HOGENOM" id="CLU_058719_1_2_1"/>
<dbReference type="OMA" id="ALLWKYN"/>
<dbReference type="OrthoDB" id="1937044at2759"/>
<dbReference type="PRO" id="PR:Q8L6Z5"/>
<dbReference type="Proteomes" id="UP000006548">
    <property type="component" value="Chromosome 5"/>
</dbReference>
<dbReference type="ExpressionAtlas" id="Q8L6Z5">
    <property type="expression patterns" value="baseline and differential"/>
</dbReference>
<dbReference type="GO" id="GO:0005886">
    <property type="term" value="C:plasma membrane"/>
    <property type="evidence" value="ECO:0007669"/>
    <property type="project" value="UniProtKB-SubCell"/>
</dbReference>
<dbReference type="GO" id="GO:0098552">
    <property type="term" value="C:side of membrane"/>
    <property type="evidence" value="ECO:0007669"/>
    <property type="project" value="UniProtKB-KW"/>
</dbReference>
<dbReference type="GO" id="GO:0009055">
    <property type="term" value="F:electron transfer activity"/>
    <property type="evidence" value="ECO:0007669"/>
    <property type="project" value="InterPro"/>
</dbReference>
<dbReference type="CDD" id="cd11019">
    <property type="entry name" value="OsENODL1_like"/>
    <property type="match status" value="1"/>
</dbReference>
<dbReference type="FunFam" id="2.60.40.420:FF:000069">
    <property type="entry name" value="Early nodulin-like protein 1"/>
    <property type="match status" value="1"/>
</dbReference>
<dbReference type="Gene3D" id="2.60.40.420">
    <property type="entry name" value="Cupredoxins - blue copper proteins"/>
    <property type="match status" value="1"/>
</dbReference>
<dbReference type="InterPro" id="IPR008972">
    <property type="entry name" value="Cupredoxin"/>
</dbReference>
<dbReference type="InterPro" id="IPR041846">
    <property type="entry name" value="ENL_dom"/>
</dbReference>
<dbReference type="InterPro" id="IPR039391">
    <property type="entry name" value="Phytocyanin-like"/>
</dbReference>
<dbReference type="InterPro" id="IPR003245">
    <property type="entry name" value="Phytocyanin_dom"/>
</dbReference>
<dbReference type="PANTHER" id="PTHR33021">
    <property type="entry name" value="BLUE COPPER PROTEIN"/>
    <property type="match status" value="1"/>
</dbReference>
<dbReference type="PANTHER" id="PTHR33021:SF519">
    <property type="entry name" value="EARLY NODULIN-LIKE PROTEIN 10"/>
    <property type="match status" value="1"/>
</dbReference>
<dbReference type="Pfam" id="PF02298">
    <property type="entry name" value="Cu_bind_like"/>
    <property type="match status" value="1"/>
</dbReference>
<dbReference type="SUPFAM" id="SSF49503">
    <property type="entry name" value="Cupredoxins"/>
    <property type="match status" value="1"/>
</dbReference>
<dbReference type="PROSITE" id="PS51485">
    <property type="entry name" value="PHYTOCYANIN"/>
    <property type="match status" value="1"/>
</dbReference>